<evidence type="ECO:0000255" key="1">
    <source>
        <dbReference type="HAMAP-Rule" id="MF_01201"/>
    </source>
</evidence>
<evidence type="ECO:0000269" key="2">
    <source>
    </source>
</evidence>
<evidence type="ECO:0000269" key="3">
    <source>
    </source>
</evidence>
<evidence type="ECO:0000269" key="4">
    <source>
    </source>
</evidence>
<evidence type="ECO:0000269" key="5">
    <source>
    </source>
</evidence>
<evidence type="ECO:0000269" key="6">
    <source>
    </source>
</evidence>
<evidence type="ECO:0000269" key="7">
    <source>
    </source>
</evidence>
<evidence type="ECO:0000269" key="8">
    <source>
    </source>
</evidence>
<evidence type="ECO:0000269" key="9">
    <source>
    </source>
</evidence>
<evidence type="ECO:0000269" key="10">
    <source>
    </source>
</evidence>
<evidence type="ECO:0000269" key="11">
    <source ref="10"/>
</evidence>
<evidence type="ECO:0000305" key="12"/>
<evidence type="ECO:0000305" key="13">
    <source>
    </source>
</evidence>
<evidence type="ECO:0000305" key="14">
    <source>
    </source>
</evidence>
<evidence type="ECO:0007829" key="15">
    <source>
        <dbReference type="PDB" id="1BD0"/>
    </source>
</evidence>
<evidence type="ECO:0007829" key="16">
    <source>
        <dbReference type="PDB" id="1XQK"/>
    </source>
</evidence>
<evidence type="ECO:0007829" key="17">
    <source>
        <dbReference type="PDB" id="1XQL"/>
    </source>
</evidence>
<evidence type="ECO:0007829" key="18">
    <source>
        <dbReference type="PDB" id="2SFP"/>
    </source>
</evidence>
<reference key="1">
    <citation type="journal article" date="1988" name="Biochemistry">
        <title>Thermostable alanine racemase from Bacillus stearothermophilus: DNA and protein sequence determination and secondary structure prediction.</title>
        <authorList>
            <person name="Tanizawa K."/>
            <person name="Ohshima A."/>
            <person name="Scheidegger A."/>
            <person name="Inagaki K."/>
            <person name="Tanaka H."/>
            <person name="Soda K."/>
        </authorList>
    </citation>
    <scope>NUCLEOTIDE SEQUENCE [GENOMIC DNA]</scope>
</reference>
<reference key="2">
    <citation type="journal article" date="1989" name="Biochemistry">
        <title>Mechanism of inactivation of alanine racemase by beta, beta, beta-trifluoroalanine.</title>
        <authorList>
            <person name="Faraci W.S."/>
            <person name="Walsh C.T."/>
        </authorList>
    </citation>
    <scope>PROTEIN SEQUENCE OF 31-43</scope>
</reference>
<reference key="3">
    <citation type="journal article" date="1986" name="Biochemistry">
        <title>Time-dependent inhibition of Bacillus stearothermophilus alanine racemase by (1-aminoethyl)phosphonate isomers by isomerization to noncovalent slowly dissociating enzyme-(1-aminoethyl)phosphonate complexes.</title>
        <authorList>
            <person name="Badet B."/>
            <person name="Inagaki K."/>
            <person name="Soda K."/>
            <person name="Walsh C.T."/>
        </authorList>
    </citation>
    <scope>PROTEIN SEQUENCE OF 36-43</scope>
</reference>
<reference key="4">
    <citation type="journal article" date="1999" name="Biochemistry">
        <title>Evidence for a two-base mechanism involving tyrosine-265 from arginine-219 mutants of alanine racemase.</title>
        <authorList>
            <person name="Sun S."/>
            <person name="Toney M.D."/>
        </authorList>
    </citation>
    <scope>MUTAGENESIS OF ARG-219</scope>
</reference>
<reference key="5">
    <citation type="journal article" date="1999" name="J. Biochem.">
        <title>Tyrosine 265 of alanine racemase serves as a base abstracting alpha-hydrogen from L-alanine: the counterpart residue to lysine 39 specific to D-alanine.</title>
        <authorList>
            <person name="Watanabe A."/>
            <person name="Yoshimura T."/>
            <person name="Mikami B."/>
            <person name="Esaki N."/>
        </authorList>
    </citation>
    <scope>FUNCTION</scope>
    <scope>ACTIVE SITES</scope>
    <scope>MUTAGENESIS</scope>
</reference>
<reference key="6">
    <citation type="journal article" date="2002" name="ChemBioChem">
        <title>Site-directed mutagenesis of Tyr354 in Geobacillus stearothermophilus alanine racemase identifies a role in controlling substrate specificity and a possible role in the evolution of antibiotic resistance.</title>
        <authorList>
            <person name="Patrick W.M."/>
            <person name="Weisner J."/>
            <person name="Blackburn J.M."/>
        </authorList>
    </citation>
    <scope>FUNCTION</scope>
    <scope>CATALYTIC ACTIVITY</scope>
    <scope>MUTAGENESIS OF TYR-354</scope>
</reference>
<reference key="7">
    <citation type="journal article" date="1997" name="Biochemistry">
        <title>Determination of the structure of alanine racemase from Bacillus stearothermophilus at 1.9-A resolution.</title>
        <authorList>
            <person name="Shaw J.P."/>
            <person name="Petsko G.A."/>
            <person name="Ringe D."/>
        </authorList>
    </citation>
    <scope>X-RAY CRYSTALLOGRAPHY (1.9 ANGSTROMS) IN COMPLEX WITH PYRIDOXAL PHOSPHATE</scope>
    <scope>COFACTOR</scope>
    <scope>SUBUNIT</scope>
    <scope>PYRIDOXAL PHOSPHATE AT LYS-39</scope>
    <scope>SEQUENCE REVISION</scope>
</reference>
<reference key="8">
    <citation type="journal article" date="1998" name="Biochemistry">
        <title>Reaction of alanine racemase with 1-aminoethylphosphonic acid forms a stable external aldimine.</title>
        <authorList>
            <person name="Stamper C.G."/>
            <person name="Morollo A.A."/>
            <person name="Ringe D."/>
        </authorList>
    </citation>
    <scope>X-RAY CRYSTALLOGRAPHY (1.6 ANGSTROMS) IN COMPLEX WITH PYRIDOXAL PHOSPHATE AND L-ALA PHOSPHONATE</scope>
    <scope>COFACTOR</scope>
    <scope>ACTIVE SITE</scope>
</reference>
<reference key="9">
    <citation type="journal article" date="1999" name="Biochemistry">
        <title>Structure of a Michaelis complex analogue: propionate binds in the substrate carboxylate site of alanine racemase.</title>
        <authorList>
            <person name="Morollo A.A."/>
            <person name="Petsko G.A."/>
            <person name="Ringe D."/>
        </authorList>
    </citation>
    <scope>X-RAY CRYSTALLOGRAPHY (1.9 ANGSTROMS)IN COMPLEX WITH PYRIDOXAL PHOSPHATE AND PROPIONATE</scope>
    <scope>CATALYTIC ACTIVITY</scope>
    <scope>SUBUNIT</scope>
    <scope>COFACTOR</scope>
    <scope>PYRIDOXAL PHOSPHATE AT LYS-39</scope>
    <scope>ACTIVITY REGULATION</scope>
    <scope>CARBOXYLATION AT LYS-129</scope>
    <source>
        <strain>ATCC 12980 / DSM 22 / CCM 2062 / JCM 2501 / NBRC 12550 / NCIMB 8923 / NCTC 10339 / R-35646 / VKM B-510</strain>
    </source>
</reference>
<reference key="10">
    <citation type="submission" date="2000-09" db="PDB data bank">
        <title>Crystal structure of alanine racemase in complex with D-alanine phosphonate.</title>
        <authorList>
            <person name="Stamper G.F."/>
            <person name="Ringe D."/>
        </authorList>
    </citation>
    <scope>X-RAY CRYSTALLOGRAPHY (2.20 ANGSTROMS) IN COMPLEX WITH D-ALANINE PHOSPHONATE</scope>
    <scope>CARBOXYLATION AT LYS-129</scope>
</reference>
<reference key="11">
    <citation type="journal article" date="2002" name="J. Biol. Chem.">
        <title>Reaction mechanism of alanine racemase from Bacillus stearothermophilus: x-ray crystallographic studies of the enzyme bound with N-(5'-phosphopyridoxyl)alanine.</title>
        <authorList>
            <person name="Watanabe A."/>
            <person name="Yoshimura T."/>
            <person name="Mikami B."/>
            <person name="Hayashi H."/>
            <person name="Kagamiyama H."/>
            <person name="Esaki N."/>
        </authorList>
    </citation>
    <scope>X-RAY CRYSTALLOGRAPHY (2.00 ANGSTROMS) IN COMPLEXES WITH N-(5'-PHOSPHOPYRIDOXYL)-D-ALANINE AND N-(5'-PHOSPHOPYRIDOXYL)-L-ALANINE</scope>
    <scope>COFACTOR</scope>
    <scope>ACTIVE SITE</scope>
    <scope>PYRIDOXAL PHOSPHATE AT LYS-39</scope>
    <scope>CARBOXYLATION AT LYS-129</scope>
</reference>
<reference key="12">
    <citation type="journal article" date="2003" name="Biochemistry">
        <title>A side reaction of alanine racemase: transamination of cycloserine.</title>
        <authorList>
            <person name="Fenn T.D."/>
            <person name="Stamper G.F."/>
            <person name="Morollo A.A."/>
            <person name="Ringe D."/>
        </authorList>
    </citation>
    <scope>X-RAY CRYSTALLOGRAPHY (2.20 ANGSTROMS) IN COMPLEXES WITH PYRIDOXAL PHOSPHATE AND CYCLOSERINE</scope>
    <scope>CATALYTIC ACTIVITY</scope>
    <scope>ACTIVITY REGULATION</scope>
    <scope>COFACTOR</scope>
    <scope>ACTIVE SITE</scope>
    <scope>CARBOXYLATION AT LYS-129</scope>
</reference>
<reference key="13">
    <citation type="journal article" date="2005" name="Biochemistry">
        <title>Effect of a Y265F mutant on the transamination-based cycloserine inactivation of alanine racemase.</title>
        <authorList>
            <person name="Fenn T.D."/>
            <person name="Holyoak T."/>
            <person name="Stamper G.F."/>
            <person name="Ringe D."/>
        </authorList>
    </citation>
    <scope>X-RAY CRYSTALLOGRAPHY (1.80 ANGSTROMS) IN COMPLEX WITH CYCLOSERINE AND PYRIDOXAL PHOSPHATE</scope>
    <scope>COFACTOR</scope>
    <scope>SUBUNIT</scope>
    <scope>PYRIDOXAL PHOSPHATE AT LYS-39</scope>
    <scope>MUTAGENESIS OF TYR-265</scope>
    <scope>ACTIVITY REGULATION</scope>
    <scope>ACTIVE SITE</scope>
    <scope>CARBOXYLATION AT LYS-129</scope>
</reference>
<sequence>MNDFHRDTWAEVDLDAIYDNVENLRRLLPDDTHIMAVVKANAYGHGDVQVARTALEAGASRLAVAFLDEALALREKGIEAPILVLGASRPADAALAAQQRIALTVFRSDWLEEASALYSGPFPIHFHLKMDTGMGRLGVKDEEETKRIVALIERHPHFVLEGLYTHFATADEVNTDYFSYQYTRFLHMLEWLPSRPPLVHCANSAASLRFPDRTFNMVRFGIAMYGLAPSPGIKPLLPYPLKEAFSLHSRLVHVKKLQPGEKVSYGATYTAQTEEWIGTIPIGYADGWLRRLQHFHVLVDGQKAPIVGRICMDQCMIRLPGPLPVGTKVTLIGRQGDEVISIDDVARHLETINYEVPCTISYRVPRIFFRHKRIMEVRNAIGRGESSA</sequence>
<keyword id="KW-0002">3D-structure</keyword>
<keyword id="KW-0903">Direct protein sequencing</keyword>
<keyword id="KW-0413">Isomerase</keyword>
<keyword id="KW-0663">Pyridoxal phosphate</keyword>
<comment type="function">
    <text evidence="4 6">Catalyzes the interconversion of L-alanine and D-alanine. Also weakly active on serine.</text>
</comment>
<comment type="catalytic activity">
    <reaction evidence="1 2 6 7">
        <text>L-alanine = D-alanine</text>
        <dbReference type="Rhea" id="RHEA:20249"/>
        <dbReference type="ChEBI" id="CHEBI:57416"/>
        <dbReference type="ChEBI" id="CHEBI:57972"/>
        <dbReference type="EC" id="5.1.1.1"/>
    </reaction>
</comment>
<comment type="cofactor">
    <cofactor evidence="1 2 5 7 8 9 10">
        <name>pyridoxal 5'-phosphate</name>
        <dbReference type="ChEBI" id="CHEBI:597326"/>
    </cofactor>
</comment>
<comment type="activity regulation">
    <text evidence="2 7 8">Inhibited by acetate and propionate. Irreversibly inhibited by cycloserine.</text>
</comment>
<comment type="pathway">
    <text evidence="1">Amino-acid biosynthesis; D-alanine biosynthesis; D-alanine from L-alanine: step 1/1.</text>
</comment>
<comment type="subunit">
    <text evidence="2 8 9 10 11">Homodimer.</text>
</comment>
<comment type="similarity">
    <text evidence="1">Belongs to the alanine racemase family.</text>
</comment>
<dbReference type="EC" id="5.1.1.1" evidence="1 2 6 7"/>
<dbReference type="EMBL" id="M19142">
    <property type="protein sequence ID" value="AAA22220.1"/>
    <property type="molecule type" value="Genomic_DNA"/>
</dbReference>
<dbReference type="PIR" id="A29984">
    <property type="entry name" value="A29984"/>
</dbReference>
<dbReference type="PDB" id="1BD0">
    <property type="method" value="X-ray"/>
    <property type="resolution" value="1.60 A"/>
    <property type="chains" value="A/B=1-388"/>
</dbReference>
<dbReference type="PDB" id="1EPV">
    <property type="method" value="X-ray"/>
    <property type="resolution" value="2.20 A"/>
    <property type="chains" value="A/B=2-388"/>
</dbReference>
<dbReference type="PDB" id="1FTX">
    <property type="method" value="X-ray"/>
    <property type="resolution" value="2.20 A"/>
    <property type="chains" value="A/B=2-388"/>
</dbReference>
<dbReference type="PDB" id="1L6F">
    <property type="method" value="X-ray"/>
    <property type="resolution" value="2.00 A"/>
    <property type="chains" value="A/B=1-388"/>
</dbReference>
<dbReference type="PDB" id="1L6G">
    <property type="method" value="X-ray"/>
    <property type="resolution" value="2.00 A"/>
    <property type="chains" value="A/B=1-388"/>
</dbReference>
<dbReference type="PDB" id="1NIU">
    <property type="method" value="X-ray"/>
    <property type="resolution" value="2.20 A"/>
    <property type="chains" value="A/B=1-388"/>
</dbReference>
<dbReference type="PDB" id="1SFT">
    <property type="method" value="X-ray"/>
    <property type="resolution" value="1.90 A"/>
    <property type="chains" value="A/B=1-388"/>
</dbReference>
<dbReference type="PDB" id="1XQK">
    <property type="method" value="X-ray"/>
    <property type="resolution" value="1.95 A"/>
    <property type="chains" value="A/B=1-388"/>
</dbReference>
<dbReference type="PDB" id="1XQL">
    <property type="method" value="X-ray"/>
    <property type="resolution" value="1.80 A"/>
    <property type="chains" value="A/B=1-388"/>
</dbReference>
<dbReference type="PDB" id="2SFP">
    <property type="method" value="X-ray"/>
    <property type="resolution" value="1.90 A"/>
    <property type="chains" value="A/B=1-388"/>
</dbReference>
<dbReference type="PDB" id="3UW6">
    <property type="method" value="X-ray"/>
    <property type="resolution" value="2.30 A"/>
    <property type="chains" value="A/B/C=1-388"/>
</dbReference>
<dbReference type="PDB" id="4ILS">
    <property type="method" value="X-ray"/>
    <property type="resolution" value="2.50 A"/>
    <property type="chains" value="A/B/C=1-388"/>
</dbReference>
<dbReference type="PDBsum" id="1BD0"/>
<dbReference type="PDBsum" id="1EPV"/>
<dbReference type="PDBsum" id="1FTX"/>
<dbReference type="PDBsum" id="1L6F"/>
<dbReference type="PDBsum" id="1L6G"/>
<dbReference type="PDBsum" id="1NIU"/>
<dbReference type="PDBsum" id="1SFT"/>
<dbReference type="PDBsum" id="1XQK"/>
<dbReference type="PDBsum" id="1XQL"/>
<dbReference type="PDBsum" id="2SFP"/>
<dbReference type="PDBsum" id="3UW6"/>
<dbReference type="PDBsum" id="4ILS"/>
<dbReference type="SMR" id="P10724"/>
<dbReference type="ChEMBL" id="CHEMBL1075086"/>
<dbReference type="DrugBank" id="DB02038">
    <property type="generic name" value="D-[3-hydroxy-2-methyl-5-phosphonooxymethyl-pyridin-4-ylmethyl]-N,O-cycloserylamide"/>
</dbReference>
<dbReference type="DrugBank" id="DB03801">
    <property type="generic name" value="Lysine Nz-Carboxylic Acid"/>
</dbReference>
<dbReference type="DrugBank" id="DB01993">
    <property type="generic name" value="N-(5'-Phosphopyridoxyl)-D-Alanine"/>
</dbReference>
<dbReference type="DrugBank" id="DB04467">
    <property type="generic name" value="N-(5'-phosphopyridoxyl)-L-alanine"/>
</dbReference>
<dbReference type="DrugBank" id="DB03097">
    <property type="generic name" value="PMP-hydroxyisoxazole, pyridoxamine-5-phosphate-hydroxyisoxazole"/>
</dbReference>
<dbReference type="DrugBank" id="DB03766">
    <property type="generic name" value="Propanoic acid"/>
</dbReference>
<dbReference type="DrugBank" id="DB02142">
    <property type="generic name" value="Pyridoxamine-5'-Phosphate"/>
</dbReference>
<dbReference type="DrugBank" id="DB03327">
    <property type="generic name" value="{1-[(3-Hydroxy-Methyl-5-Phosphonooxy-Methyl-Pyridin-4-Ylmethyl)-Amino]-Ethyl}-Phosphonic Acid"/>
</dbReference>
<dbReference type="BRENDA" id="5.1.1.1">
    <property type="organism ID" value="623"/>
</dbReference>
<dbReference type="SABIO-RK" id="P10724"/>
<dbReference type="UniPathway" id="UPA00042">
    <property type="reaction ID" value="UER00497"/>
</dbReference>
<dbReference type="EvolutionaryTrace" id="P10724"/>
<dbReference type="GO" id="GO:0005829">
    <property type="term" value="C:cytosol"/>
    <property type="evidence" value="ECO:0007669"/>
    <property type="project" value="TreeGrafter"/>
</dbReference>
<dbReference type="GO" id="GO:0008784">
    <property type="term" value="F:alanine racemase activity"/>
    <property type="evidence" value="ECO:0007669"/>
    <property type="project" value="UniProtKB-UniRule"/>
</dbReference>
<dbReference type="GO" id="GO:0030170">
    <property type="term" value="F:pyridoxal phosphate binding"/>
    <property type="evidence" value="ECO:0007669"/>
    <property type="project" value="UniProtKB-UniRule"/>
</dbReference>
<dbReference type="GO" id="GO:0030632">
    <property type="term" value="P:D-alanine biosynthetic process"/>
    <property type="evidence" value="ECO:0007669"/>
    <property type="project" value="UniProtKB-UniRule"/>
</dbReference>
<dbReference type="GO" id="GO:0009252">
    <property type="term" value="P:peptidoglycan biosynthetic process"/>
    <property type="evidence" value="ECO:0007669"/>
    <property type="project" value="TreeGrafter"/>
</dbReference>
<dbReference type="CDD" id="cd00430">
    <property type="entry name" value="PLPDE_III_AR"/>
    <property type="match status" value="1"/>
</dbReference>
<dbReference type="FunFam" id="2.40.37.10:FF:000006">
    <property type="entry name" value="Alanine racemase"/>
    <property type="match status" value="1"/>
</dbReference>
<dbReference type="FunFam" id="3.20.20.10:FF:000002">
    <property type="entry name" value="Alanine racemase"/>
    <property type="match status" value="1"/>
</dbReference>
<dbReference type="Gene3D" id="3.20.20.10">
    <property type="entry name" value="Alanine racemase"/>
    <property type="match status" value="1"/>
</dbReference>
<dbReference type="Gene3D" id="2.40.37.10">
    <property type="entry name" value="Lyase, Ornithine Decarboxylase, Chain A, domain 1"/>
    <property type="match status" value="1"/>
</dbReference>
<dbReference type="HAMAP" id="MF_01201">
    <property type="entry name" value="Ala_racemase"/>
    <property type="match status" value="1"/>
</dbReference>
<dbReference type="InterPro" id="IPR000821">
    <property type="entry name" value="Ala_racemase"/>
</dbReference>
<dbReference type="InterPro" id="IPR009006">
    <property type="entry name" value="Ala_racemase/Decarboxylase_C"/>
</dbReference>
<dbReference type="InterPro" id="IPR011079">
    <property type="entry name" value="Ala_racemase_C"/>
</dbReference>
<dbReference type="InterPro" id="IPR001608">
    <property type="entry name" value="Ala_racemase_N"/>
</dbReference>
<dbReference type="InterPro" id="IPR020622">
    <property type="entry name" value="Ala_racemase_pyridoxalP-BS"/>
</dbReference>
<dbReference type="InterPro" id="IPR029066">
    <property type="entry name" value="PLP-binding_barrel"/>
</dbReference>
<dbReference type="NCBIfam" id="TIGR00492">
    <property type="entry name" value="alr"/>
    <property type="match status" value="1"/>
</dbReference>
<dbReference type="PANTHER" id="PTHR30511">
    <property type="entry name" value="ALANINE RACEMASE"/>
    <property type="match status" value="1"/>
</dbReference>
<dbReference type="PANTHER" id="PTHR30511:SF0">
    <property type="entry name" value="ALANINE RACEMASE, CATABOLIC-RELATED"/>
    <property type="match status" value="1"/>
</dbReference>
<dbReference type="Pfam" id="PF00842">
    <property type="entry name" value="Ala_racemase_C"/>
    <property type="match status" value="1"/>
</dbReference>
<dbReference type="Pfam" id="PF01168">
    <property type="entry name" value="Ala_racemase_N"/>
    <property type="match status" value="1"/>
</dbReference>
<dbReference type="PRINTS" id="PR00992">
    <property type="entry name" value="ALARACEMASE"/>
</dbReference>
<dbReference type="SMART" id="SM01005">
    <property type="entry name" value="Ala_racemase_C"/>
    <property type="match status" value="1"/>
</dbReference>
<dbReference type="SUPFAM" id="SSF50621">
    <property type="entry name" value="Alanine racemase C-terminal domain-like"/>
    <property type="match status" value="1"/>
</dbReference>
<dbReference type="SUPFAM" id="SSF51419">
    <property type="entry name" value="PLP-binding barrel"/>
    <property type="match status" value="1"/>
</dbReference>
<dbReference type="PROSITE" id="PS00395">
    <property type="entry name" value="ALANINE_RACEMASE"/>
    <property type="match status" value="1"/>
</dbReference>
<organism>
    <name type="scientific">Geobacillus stearothermophilus</name>
    <name type="common">Bacillus stearothermophilus</name>
    <dbReference type="NCBI Taxonomy" id="1422"/>
    <lineage>
        <taxon>Bacteria</taxon>
        <taxon>Bacillati</taxon>
        <taxon>Bacillota</taxon>
        <taxon>Bacilli</taxon>
        <taxon>Bacillales</taxon>
        <taxon>Anoxybacillaceae</taxon>
        <taxon>Geobacillus</taxon>
    </lineage>
</organism>
<gene>
    <name type="primary">alr</name>
    <name type="synonym">dal</name>
</gene>
<proteinExistence type="evidence at protein level"/>
<protein>
    <recommendedName>
        <fullName evidence="1">Alanine racemase</fullName>
        <ecNumber evidence="1 2 6 7">5.1.1.1</ecNumber>
    </recommendedName>
</protein>
<feature type="chain" id="PRO_0000114499" description="Alanine racemase">
    <location>
        <begin position="1"/>
        <end position="388"/>
    </location>
</feature>
<feature type="active site" description="Proton acceptor; specific for D-alanine" evidence="13 14">
    <location>
        <position position="39"/>
    </location>
</feature>
<feature type="active site" description="Proton acceptor; specific for L-alanine" evidence="13 14">
    <location>
        <position position="265"/>
    </location>
</feature>
<feature type="binding site" evidence="5">
    <location>
        <position position="136"/>
    </location>
    <ligand>
        <name>substrate</name>
    </ligand>
</feature>
<feature type="binding site" evidence="5">
    <location>
        <position position="312"/>
    </location>
    <ligand>
        <name>substrate</name>
    </ligand>
</feature>
<feature type="modified residue" description="N6-(pyridoxal phosphate)lysine" evidence="5 8 9">
    <location>
        <position position="39"/>
    </location>
</feature>
<feature type="modified residue" description="N6-carboxylysine" evidence="2 5 7 8 11">
    <location>
        <position position="129"/>
    </location>
</feature>
<feature type="mutagenesis site" description="Loss of activity." evidence="4">
    <original>K</original>
    <variation>A</variation>
    <location>
        <position position="39"/>
    </location>
</feature>
<feature type="mutagenesis site" description="6.5-fold decrease in activity." evidence="4">
    <original>H</original>
    <variation>A</variation>
    <location>
        <position position="166"/>
    </location>
</feature>
<feature type="mutagenesis site" description="100-fold decrease in activity." evidence="3">
    <original>R</original>
    <variation>A</variation>
    <location>
        <position position="219"/>
    </location>
</feature>
<feature type="mutagenesis site" description="1000-fold decrease in activity." evidence="3">
    <original>R</original>
    <variation>E</variation>
    <location>
        <position position="219"/>
    </location>
</feature>
<feature type="mutagenesis site" description="4-fold decrease in activity." evidence="3">
    <original>R</original>
    <variation>K</variation>
    <location>
        <position position="219"/>
    </location>
</feature>
<feature type="mutagenesis site" description="5000-fold decrease in activity." evidence="8">
    <original>Y</original>
    <variation>A</variation>
    <location>
        <position position="265"/>
    </location>
</feature>
<feature type="mutagenesis site" description="Loss of activity." evidence="8">
    <original>Y</original>
    <variation>F</variation>
    <location>
        <position position="265"/>
    </location>
</feature>
<feature type="mutagenesis site" description="2000-fold decrease in activity." evidence="8">
    <original>Y</original>
    <variation>S</variation>
    <location>
        <position position="265"/>
    </location>
</feature>
<feature type="mutagenesis site" description="54-fold increase in serine racemase activity." evidence="6">
    <original>Y</original>
    <variation>A</variation>
    <location>
        <position position="354"/>
    </location>
</feature>
<feature type="mutagenesis site" description="81-fold increase in serine racemase activity." evidence="6">
    <original>Y</original>
    <variation>N</variation>
    <location>
        <position position="354"/>
    </location>
</feature>
<feature type="mutagenesis site" description="51-fold increase in serine racemase activity." evidence="6">
    <original>Y</original>
    <variation>Q</variation>
    <location>
        <position position="354"/>
    </location>
</feature>
<feature type="sequence conflict" description="In Ref. 3; AA sequence." evidence="12" ref="3">
    <original>VV</original>
    <variation>PP</variation>
    <location>
        <begin position="37"/>
        <end position="38"/>
    </location>
</feature>
<feature type="sequence conflict" description="In Ref. 1; AAA22220." evidence="12" ref="1">
    <original>AGASRL</original>
    <variation>RGPPP</variation>
    <location>
        <begin position="57"/>
        <end position="62"/>
    </location>
</feature>
<feature type="sequence conflict" description="In Ref. 1; AAA22220." evidence="12" ref="1">
    <original>WL</original>
    <variation>V</variation>
    <location>
        <begin position="288"/>
        <end position="289"/>
    </location>
</feature>
<feature type="strand" evidence="15">
    <location>
        <begin position="6"/>
        <end position="13"/>
    </location>
</feature>
<feature type="helix" evidence="15">
    <location>
        <begin position="14"/>
        <end position="27"/>
    </location>
</feature>
<feature type="strand" evidence="15">
    <location>
        <begin position="33"/>
        <end position="37"/>
    </location>
</feature>
<feature type="helix" evidence="15">
    <location>
        <begin position="39"/>
        <end position="43"/>
    </location>
</feature>
<feature type="helix" evidence="15">
    <location>
        <begin position="47"/>
        <end position="57"/>
    </location>
</feature>
<feature type="strand" evidence="15">
    <location>
        <begin position="61"/>
        <end position="66"/>
    </location>
</feature>
<feature type="helix" evidence="15">
    <location>
        <begin position="67"/>
        <end position="75"/>
    </location>
</feature>
<feature type="strand" evidence="15">
    <location>
        <begin position="82"/>
        <end position="84"/>
    </location>
</feature>
<feature type="helix" evidence="15">
    <location>
        <begin position="90"/>
        <end position="92"/>
    </location>
</feature>
<feature type="helix" evidence="15">
    <location>
        <begin position="93"/>
        <end position="98"/>
    </location>
</feature>
<feature type="strand" evidence="15">
    <location>
        <begin position="101"/>
        <end position="105"/>
    </location>
</feature>
<feature type="helix" evidence="15">
    <location>
        <begin position="108"/>
        <end position="117"/>
    </location>
</feature>
<feature type="strand" evidence="15">
    <location>
        <begin position="124"/>
        <end position="130"/>
    </location>
</feature>
<feature type="strand" evidence="15">
    <location>
        <begin position="132"/>
        <end position="134"/>
    </location>
</feature>
<feature type="strand" evidence="15">
    <location>
        <begin position="136"/>
        <end position="139"/>
    </location>
</feature>
<feature type="helix" evidence="15">
    <location>
        <begin position="142"/>
        <end position="154"/>
    </location>
</feature>
<feature type="strand" evidence="15">
    <location>
        <begin position="158"/>
        <end position="164"/>
    </location>
</feature>
<feature type="strand" evidence="16">
    <location>
        <begin position="172"/>
        <end position="174"/>
    </location>
</feature>
<feature type="helix" evidence="15">
    <location>
        <begin position="176"/>
        <end position="189"/>
    </location>
</feature>
<feature type="strand" evidence="18">
    <location>
        <begin position="192"/>
        <end position="194"/>
    </location>
</feature>
<feature type="strand" evidence="15">
    <location>
        <begin position="197"/>
        <end position="200"/>
    </location>
</feature>
<feature type="helix" evidence="15">
    <location>
        <begin position="204"/>
        <end position="209"/>
    </location>
</feature>
<feature type="helix" evidence="17">
    <location>
        <begin position="211"/>
        <end position="213"/>
    </location>
</feature>
<feature type="strand" evidence="15">
    <location>
        <begin position="217"/>
        <end position="220"/>
    </location>
</feature>
<feature type="helix" evidence="15">
    <location>
        <begin position="222"/>
        <end position="225"/>
    </location>
</feature>
<feature type="helix" evidence="15">
    <location>
        <begin position="231"/>
        <end position="236"/>
    </location>
</feature>
<feature type="strand" evidence="15">
    <location>
        <begin position="245"/>
        <end position="250"/>
    </location>
</feature>
<feature type="strand" evidence="15">
    <location>
        <begin position="252"/>
        <end position="257"/>
    </location>
</feature>
<feature type="strand" evidence="15">
    <location>
        <begin position="262"/>
        <end position="264"/>
    </location>
</feature>
<feature type="helix" evidence="15">
    <location>
        <begin position="265"/>
        <end position="267"/>
    </location>
</feature>
<feature type="strand" evidence="15">
    <location>
        <begin position="273"/>
        <end position="281"/>
    </location>
</feature>
<feature type="helix" evidence="15">
    <location>
        <begin position="284"/>
        <end position="286"/>
    </location>
</feature>
<feature type="helix" evidence="15">
    <location>
        <begin position="290"/>
        <end position="294"/>
    </location>
</feature>
<feature type="strand" evidence="15">
    <location>
        <begin position="296"/>
        <end position="299"/>
    </location>
</feature>
<feature type="strand" evidence="15">
    <location>
        <begin position="302"/>
        <end position="308"/>
    </location>
</feature>
<feature type="strand" evidence="15">
    <location>
        <begin position="315"/>
        <end position="318"/>
    </location>
</feature>
<feature type="strand" evidence="15">
    <location>
        <begin position="328"/>
        <end position="335"/>
    </location>
</feature>
<feature type="strand" evidence="15">
    <location>
        <begin position="338"/>
        <end position="340"/>
    </location>
</feature>
<feature type="helix" evidence="15">
    <location>
        <begin position="342"/>
        <end position="349"/>
    </location>
</feature>
<feature type="helix" evidence="15">
    <location>
        <begin position="355"/>
        <end position="359"/>
    </location>
</feature>
<feature type="strand" evidence="15">
    <location>
        <begin position="366"/>
        <end position="370"/>
    </location>
</feature>
<feature type="strand" evidence="15">
    <location>
        <begin position="373"/>
        <end position="378"/>
    </location>
</feature>
<name>ALR_GEOSE</name>
<accession>P10724</accession>